<accession>Q0W9P9</accession>
<organism>
    <name type="scientific">Equus caballus</name>
    <name type="common">Horse</name>
    <dbReference type="NCBI Taxonomy" id="9796"/>
    <lineage>
        <taxon>Eukaryota</taxon>
        <taxon>Metazoa</taxon>
        <taxon>Chordata</taxon>
        <taxon>Craniata</taxon>
        <taxon>Vertebrata</taxon>
        <taxon>Euteleostomi</taxon>
        <taxon>Mammalia</taxon>
        <taxon>Eutheria</taxon>
        <taxon>Laurasiatheria</taxon>
        <taxon>Perissodactyla</taxon>
        <taxon>Equidae</taxon>
        <taxon>Equus</taxon>
    </lineage>
</organism>
<feature type="signal peptide" evidence="1">
    <location>
        <begin position="1"/>
        <end position="22"/>
    </location>
</feature>
<feature type="peptide" id="PRO_0000289806" description="Beta-defensin 103A">
    <location>
        <begin position="23"/>
        <end position="67"/>
    </location>
</feature>
<feature type="disulfide bond" evidence="1">
    <location>
        <begin position="33"/>
        <end position="62"/>
    </location>
</feature>
<feature type="disulfide bond" evidence="1">
    <location>
        <begin position="40"/>
        <end position="55"/>
    </location>
</feature>
<feature type="disulfide bond" evidence="1">
    <location>
        <begin position="45"/>
        <end position="63"/>
    </location>
</feature>
<sequence>MRIHFLLFALLFLFLMPVPGNGGIINMLQKSYCKIRKGRCALLGCLPKEEQIGSCSVSGRKCCRKKK</sequence>
<comment type="function">
    <text evidence="1">Exhibits antimicrobial activity against Gram-positive and Gram-negative bacteria.</text>
</comment>
<comment type="subcellular location">
    <subcellularLocation>
        <location evidence="1">Secreted</location>
    </subcellularLocation>
</comment>
<comment type="similarity">
    <text evidence="2">Belongs to the beta-defensin family.</text>
</comment>
<gene>
    <name type="primary">DEFB103A</name>
    <name type="synonym">DEFB103</name>
</gene>
<proteinExistence type="inferred from homology"/>
<reference key="1">
    <citation type="journal article" date="2006" name="Gene">
        <title>Sequence analysis of a 212 kb defensin gene cluster on ECA 27q17.</title>
        <authorList>
            <person name="Looft C."/>
            <person name="Paul S."/>
            <person name="Philipp U."/>
            <person name="Regenhard P."/>
            <person name="Kuiper H."/>
            <person name="Distl O."/>
            <person name="Chowdhary B.P."/>
            <person name="Leeb T."/>
        </authorList>
    </citation>
    <scope>NUCLEOTIDE SEQUENCE [GENOMIC DNA]</scope>
</reference>
<name>D103A_HORSE</name>
<evidence type="ECO:0000250" key="1"/>
<evidence type="ECO:0000305" key="2"/>
<dbReference type="EMBL" id="AM039964">
    <property type="protein sequence ID" value="CAJ01801.1"/>
    <property type="molecule type" value="Genomic_DNA"/>
</dbReference>
<dbReference type="SMR" id="Q0W9P9"/>
<dbReference type="FunCoup" id="Q0W9P9">
    <property type="interactions" value="134"/>
</dbReference>
<dbReference type="STRING" id="9796.ENSECAP00000005162"/>
<dbReference type="PaxDb" id="9796-ENSECAP00000005162"/>
<dbReference type="Ensembl" id="ENSECAT00000007133.3">
    <property type="protein sequence ID" value="ENSECAP00000005162.1"/>
    <property type="gene ID" value="ENSECAG00000007143.3"/>
</dbReference>
<dbReference type="GeneID" id="100629456"/>
<dbReference type="KEGG" id="ecb:100629456"/>
<dbReference type="GeneTree" id="ENSGT00530000064280"/>
<dbReference type="HOGENOM" id="CLU_189296_2_0_1"/>
<dbReference type="InParanoid" id="Q0W9P9"/>
<dbReference type="OMA" id="RETQIGH"/>
<dbReference type="OrthoDB" id="9449637at2759"/>
<dbReference type="Proteomes" id="UP000002281">
    <property type="component" value="Chromosome 27"/>
</dbReference>
<dbReference type="Bgee" id="ENSECAG00000007143">
    <property type="expression patterns" value="Expressed in zone of skin and 5 other cell types or tissues"/>
</dbReference>
<dbReference type="GO" id="GO:0005615">
    <property type="term" value="C:extracellular space"/>
    <property type="evidence" value="ECO:0000318"/>
    <property type="project" value="GO_Central"/>
</dbReference>
<dbReference type="GO" id="GO:0031731">
    <property type="term" value="F:CCR6 chemokine receptor binding"/>
    <property type="evidence" value="ECO:0000318"/>
    <property type="project" value="GO_Central"/>
</dbReference>
<dbReference type="GO" id="GO:0042056">
    <property type="term" value="F:chemoattractant activity"/>
    <property type="evidence" value="ECO:0000318"/>
    <property type="project" value="GO_Central"/>
</dbReference>
<dbReference type="GO" id="GO:0060326">
    <property type="term" value="P:cell chemotaxis"/>
    <property type="evidence" value="ECO:0000318"/>
    <property type="project" value="GO_Central"/>
</dbReference>
<dbReference type="GO" id="GO:0042742">
    <property type="term" value="P:defense response to bacterium"/>
    <property type="evidence" value="ECO:0000318"/>
    <property type="project" value="GO_Central"/>
</dbReference>
<dbReference type="FunFam" id="3.10.360.10:FF:000001">
    <property type="entry name" value="Beta-defensin 1"/>
    <property type="match status" value="1"/>
</dbReference>
<dbReference type="Gene3D" id="3.10.360.10">
    <property type="entry name" value="Antimicrobial Peptide, Beta-defensin 2, Chain A"/>
    <property type="match status" value="1"/>
</dbReference>
<dbReference type="InterPro" id="IPR001855">
    <property type="entry name" value="Defensin_beta-like"/>
</dbReference>
<dbReference type="PANTHER" id="PTHR20515">
    <property type="entry name" value="BETA-DEFENSIN"/>
    <property type="match status" value="1"/>
</dbReference>
<dbReference type="PANTHER" id="PTHR20515:SF0">
    <property type="entry name" value="BETA-DEFENSIN 103"/>
    <property type="match status" value="1"/>
</dbReference>
<dbReference type="Pfam" id="PF00711">
    <property type="entry name" value="Defensin_beta"/>
    <property type="match status" value="1"/>
</dbReference>
<dbReference type="SUPFAM" id="SSF57392">
    <property type="entry name" value="Defensin-like"/>
    <property type="match status" value="1"/>
</dbReference>
<protein>
    <recommendedName>
        <fullName>Beta-defensin 103A</fullName>
    </recommendedName>
    <alternativeName>
        <fullName>Defensin, beta 103</fullName>
    </alternativeName>
    <alternativeName>
        <fullName>Defensin, beta 103A</fullName>
    </alternativeName>
</protein>
<keyword id="KW-0044">Antibiotic</keyword>
<keyword id="KW-0929">Antimicrobial</keyword>
<keyword id="KW-0211">Defensin</keyword>
<keyword id="KW-1015">Disulfide bond</keyword>
<keyword id="KW-1185">Reference proteome</keyword>
<keyword id="KW-0964">Secreted</keyword>
<keyword id="KW-0732">Signal</keyword>